<organism>
    <name type="scientific">Pectobacterium atrosepticum (strain SCRI 1043 / ATCC BAA-672)</name>
    <name type="common">Erwinia carotovora subsp. atroseptica</name>
    <dbReference type="NCBI Taxonomy" id="218491"/>
    <lineage>
        <taxon>Bacteria</taxon>
        <taxon>Pseudomonadati</taxon>
        <taxon>Pseudomonadota</taxon>
        <taxon>Gammaproteobacteria</taxon>
        <taxon>Enterobacterales</taxon>
        <taxon>Pectobacteriaceae</taxon>
        <taxon>Pectobacterium</taxon>
    </lineage>
</organism>
<comment type="function">
    <text evidence="1">Involved in zinc efflux across the cytoplasmic membrane, thus reducing zinc accumulation in the cytoplasm and rendering bacteria more resistant to zinc. It may contribute to zinc homeostasis at low concentrations of zinc.</text>
</comment>
<comment type="subcellular location">
    <subcellularLocation>
        <location evidence="1">Cell inner membrane</location>
        <topology evidence="1">Multi-pass membrane protein</topology>
    </subcellularLocation>
</comment>
<comment type="similarity">
    <text evidence="1">Belongs to the cation diffusion facilitator (CDF) transporter (TC 2.A.4) family. SLC30A subfamily.</text>
</comment>
<sequence>MAHNHSHTESGNSKRLLAAFIITATFMVAEVIGGLLSGSLALLADAGHMLTDAAALFVALVAVRFAQRKPNARHTFGYLRLTTLAAFVNALTLILITAFIFWEAIQRFYDPQPVAGVPMLLVAIAGLLANIVAFWLLHHGSEEKNINVRAAALHVLGDLLGSVGAIAAAIIILYTNWTPIDPILSILVSCLVLRSAWALLKESIHELLEGTPSQLSVEALQKDVTLNIPEVRNIHHVHLWQVGEKPMMTLHAQVVPPHDHDALLRRIQEYLLKHYQIEHATIQMEYQRCDDDHCSFHQENHHLAIHDGEKHDAEGHHHKH</sequence>
<keyword id="KW-0997">Cell inner membrane</keyword>
<keyword id="KW-1003">Cell membrane</keyword>
<keyword id="KW-0406">Ion transport</keyword>
<keyword id="KW-0472">Membrane</keyword>
<keyword id="KW-1185">Reference proteome</keyword>
<keyword id="KW-0812">Transmembrane</keyword>
<keyword id="KW-1133">Transmembrane helix</keyword>
<keyword id="KW-0813">Transport</keyword>
<keyword id="KW-0862">Zinc</keyword>
<keyword id="KW-0864">Zinc transport</keyword>
<evidence type="ECO:0000255" key="1">
    <source>
        <dbReference type="HAMAP-Rule" id="MF_00552"/>
    </source>
</evidence>
<feature type="chain" id="PRO_0000206109" description="Zinc transporter ZitB">
    <location>
        <begin position="1"/>
        <end position="320"/>
    </location>
</feature>
<feature type="transmembrane region" description="Helical" evidence="1">
    <location>
        <begin position="16"/>
        <end position="36"/>
    </location>
</feature>
<feature type="transmembrane region" description="Helical" evidence="1">
    <location>
        <begin position="43"/>
        <end position="63"/>
    </location>
</feature>
<feature type="transmembrane region" description="Helical" evidence="1">
    <location>
        <begin position="85"/>
        <end position="105"/>
    </location>
</feature>
<feature type="transmembrane region" description="Helical" evidence="1">
    <location>
        <begin position="117"/>
        <end position="137"/>
    </location>
</feature>
<feature type="transmembrane region" description="Helical" evidence="1">
    <location>
        <begin position="153"/>
        <end position="173"/>
    </location>
</feature>
<feature type="transmembrane region" description="Helical" evidence="1">
    <location>
        <begin position="180"/>
        <end position="200"/>
    </location>
</feature>
<accession>Q6D7E5</accession>
<dbReference type="EMBL" id="BX950851">
    <property type="protein sequence ID" value="CAG74290.1"/>
    <property type="molecule type" value="Genomic_DNA"/>
</dbReference>
<dbReference type="RefSeq" id="WP_011092965.1">
    <property type="nucleotide sequence ID" value="NC_004547.2"/>
</dbReference>
<dbReference type="SMR" id="Q6D7E5"/>
<dbReference type="STRING" id="218491.ECA1380"/>
<dbReference type="KEGG" id="eca:ECA1380"/>
<dbReference type="PATRIC" id="fig|218491.5.peg.1414"/>
<dbReference type="eggNOG" id="COG1230">
    <property type="taxonomic scope" value="Bacteria"/>
</dbReference>
<dbReference type="HOGENOM" id="CLU_013430_0_0_6"/>
<dbReference type="OrthoDB" id="9809646at2"/>
<dbReference type="Proteomes" id="UP000007966">
    <property type="component" value="Chromosome"/>
</dbReference>
<dbReference type="GO" id="GO:0005886">
    <property type="term" value="C:plasma membrane"/>
    <property type="evidence" value="ECO:0007669"/>
    <property type="project" value="UniProtKB-SubCell"/>
</dbReference>
<dbReference type="GO" id="GO:0005385">
    <property type="term" value="F:zinc ion transmembrane transporter activity"/>
    <property type="evidence" value="ECO:0007669"/>
    <property type="project" value="InterPro"/>
</dbReference>
<dbReference type="FunFam" id="1.20.1510.10:FF:000016">
    <property type="entry name" value="Zinc transporter ZitB"/>
    <property type="match status" value="1"/>
</dbReference>
<dbReference type="Gene3D" id="1.20.1510.10">
    <property type="entry name" value="Cation efflux protein transmembrane domain"/>
    <property type="match status" value="1"/>
</dbReference>
<dbReference type="HAMAP" id="MF_00552">
    <property type="entry name" value="ZitB"/>
    <property type="match status" value="1"/>
</dbReference>
<dbReference type="InterPro" id="IPR002524">
    <property type="entry name" value="Cation_efflux"/>
</dbReference>
<dbReference type="InterPro" id="IPR036837">
    <property type="entry name" value="Cation_efflux_CTD_sf"/>
</dbReference>
<dbReference type="InterPro" id="IPR027469">
    <property type="entry name" value="Cation_efflux_TMD_sf"/>
</dbReference>
<dbReference type="InterPro" id="IPR050681">
    <property type="entry name" value="CDF/SLC30A"/>
</dbReference>
<dbReference type="InterPro" id="IPR023500">
    <property type="entry name" value="Zn_transptr_ZitB"/>
</dbReference>
<dbReference type="NCBIfam" id="TIGR01297">
    <property type="entry name" value="CDF"/>
    <property type="match status" value="1"/>
</dbReference>
<dbReference type="NCBIfam" id="NF002923">
    <property type="entry name" value="PRK03557.1"/>
    <property type="match status" value="1"/>
</dbReference>
<dbReference type="PANTHER" id="PTHR11562">
    <property type="entry name" value="CATION EFFLUX PROTEIN/ ZINC TRANSPORTER"/>
    <property type="match status" value="1"/>
</dbReference>
<dbReference type="PANTHER" id="PTHR11562:SF17">
    <property type="entry name" value="RE54080P-RELATED"/>
    <property type="match status" value="1"/>
</dbReference>
<dbReference type="Pfam" id="PF01545">
    <property type="entry name" value="Cation_efflux"/>
    <property type="match status" value="1"/>
</dbReference>
<dbReference type="SUPFAM" id="SSF160240">
    <property type="entry name" value="Cation efflux protein cytoplasmic domain-like"/>
    <property type="match status" value="1"/>
</dbReference>
<dbReference type="SUPFAM" id="SSF161111">
    <property type="entry name" value="Cation efflux protein transmembrane domain-like"/>
    <property type="match status" value="1"/>
</dbReference>
<protein>
    <recommendedName>
        <fullName evidence="1">Zinc transporter ZitB</fullName>
    </recommendedName>
</protein>
<proteinExistence type="inferred from homology"/>
<name>ZITB_PECAS</name>
<reference key="1">
    <citation type="journal article" date="2004" name="Proc. Natl. Acad. Sci. U.S.A.">
        <title>Genome sequence of the enterobacterial phytopathogen Erwinia carotovora subsp. atroseptica and characterization of virulence factors.</title>
        <authorList>
            <person name="Bell K.S."/>
            <person name="Sebaihia M."/>
            <person name="Pritchard L."/>
            <person name="Holden M.T.G."/>
            <person name="Hyman L.J."/>
            <person name="Holeva M.C."/>
            <person name="Thomson N.R."/>
            <person name="Bentley S.D."/>
            <person name="Churcher L.J.C."/>
            <person name="Mungall K."/>
            <person name="Atkin R."/>
            <person name="Bason N."/>
            <person name="Brooks K."/>
            <person name="Chillingworth T."/>
            <person name="Clark K."/>
            <person name="Doggett J."/>
            <person name="Fraser A."/>
            <person name="Hance Z."/>
            <person name="Hauser H."/>
            <person name="Jagels K."/>
            <person name="Moule S."/>
            <person name="Norbertczak H."/>
            <person name="Ormond D."/>
            <person name="Price C."/>
            <person name="Quail M.A."/>
            <person name="Sanders M."/>
            <person name="Walker D."/>
            <person name="Whitehead S."/>
            <person name="Salmond G.P.C."/>
            <person name="Birch P.R.J."/>
            <person name="Parkhill J."/>
            <person name="Toth I.K."/>
        </authorList>
    </citation>
    <scope>NUCLEOTIDE SEQUENCE [LARGE SCALE GENOMIC DNA]</scope>
    <source>
        <strain>SCRI 1043 / ATCC BAA-672</strain>
    </source>
</reference>
<gene>
    <name evidence="1" type="primary">zitB</name>
    <name type="ordered locus">ECA1380</name>
</gene>